<reference key="1">
    <citation type="journal article" date="2008" name="DNA Res.">
        <title>Comparative genome analysis of Lactobacillus reuteri and Lactobacillus fermentum reveal a genomic island for reuterin and cobalamin production.</title>
        <authorList>
            <person name="Morita H."/>
            <person name="Toh H."/>
            <person name="Fukuda S."/>
            <person name="Horikawa H."/>
            <person name="Oshima K."/>
            <person name="Suzuki T."/>
            <person name="Murakami M."/>
            <person name="Hisamatsu S."/>
            <person name="Kato Y."/>
            <person name="Takizawa T."/>
            <person name="Fukuoka H."/>
            <person name="Yoshimura T."/>
            <person name="Itoh K."/>
            <person name="O'Sullivan D.J."/>
            <person name="McKay L.L."/>
            <person name="Ohno H."/>
            <person name="Kikuchi J."/>
            <person name="Masaoka T."/>
            <person name="Hattori M."/>
        </authorList>
    </citation>
    <scope>NUCLEOTIDE SEQUENCE [LARGE SCALE GENOMIC DNA]</scope>
    <source>
        <strain>NBRC 3956 / LMG 18251</strain>
    </source>
</reference>
<keyword id="KW-0963">Cytoplasm</keyword>
<keyword id="KW-0251">Elongation factor</keyword>
<keyword id="KW-0648">Protein biosynthesis</keyword>
<keyword id="KW-1185">Reference proteome</keyword>
<comment type="function">
    <text evidence="1">Associates with the EF-Tu.GDP complex and induces the exchange of GDP to GTP. It remains bound to the aminoacyl-tRNA.EF-Tu.GTP complex up to the GTP hydrolysis stage on the ribosome.</text>
</comment>
<comment type="subcellular location">
    <subcellularLocation>
        <location evidence="1">Cytoplasm</location>
    </subcellularLocation>
</comment>
<comment type="similarity">
    <text evidence="1">Belongs to the EF-Ts family.</text>
</comment>
<evidence type="ECO:0000255" key="1">
    <source>
        <dbReference type="HAMAP-Rule" id="MF_00050"/>
    </source>
</evidence>
<gene>
    <name evidence="1" type="primary">tsf</name>
    <name type="ordered locus">LAF_0715</name>
</gene>
<organism>
    <name type="scientific">Limosilactobacillus fermentum (strain NBRC 3956 / LMG 18251)</name>
    <name type="common">Lactobacillus fermentum</name>
    <dbReference type="NCBI Taxonomy" id="334390"/>
    <lineage>
        <taxon>Bacteria</taxon>
        <taxon>Bacillati</taxon>
        <taxon>Bacillota</taxon>
        <taxon>Bacilli</taxon>
        <taxon>Lactobacillales</taxon>
        <taxon>Lactobacillaceae</taxon>
        <taxon>Limosilactobacillus</taxon>
    </lineage>
</organism>
<name>EFTS_LIMF3</name>
<accession>B2GBL9</accession>
<feature type="chain" id="PRO_1000116751" description="Elongation factor Ts">
    <location>
        <begin position="1"/>
        <end position="292"/>
    </location>
</feature>
<feature type="region of interest" description="Involved in Mg(2+) ion dislocation from EF-Tu" evidence="1">
    <location>
        <begin position="80"/>
        <end position="83"/>
    </location>
</feature>
<sequence>MAEISAKQVMELRKKSGAGIMDAKKALVASEGDMDKAMDYLREKGIAKAAKKSDRIAAEGLTDIVVKGNTAAIVELNSETDFVAASDPFKAVLKDVANLIVDNKPADVEAALELKTANGTLNDDLIATTQKTGEKVSLRRFTIVEKNDNENFGAYLHQGGRIAALTVVEGADEATAKDVAMHVAAVNPEFLDRSEVSDERLEHERGIFKEETLNEGKPANIVDKIVEGRLNKFLSQICLADQDFVKDPDLTVEKYVDSKDGKLKSFIRYEVGEGIEKKQTNLAEEIKEQLNK</sequence>
<dbReference type="EMBL" id="AP008937">
    <property type="protein sequence ID" value="BAG27051.1"/>
    <property type="molecule type" value="Genomic_DNA"/>
</dbReference>
<dbReference type="RefSeq" id="WP_003681955.1">
    <property type="nucleotide sequence ID" value="NC_010610.1"/>
</dbReference>
<dbReference type="SMR" id="B2GBL9"/>
<dbReference type="GeneID" id="83714915"/>
<dbReference type="KEGG" id="lfe:LAF_0715"/>
<dbReference type="eggNOG" id="COG0264">
    <property type="taxonomic scope" value="Bacteria"/>
</dbReference>
<dbReference type="HOGENOM" id="CLU_047155_0_2_9"/>
<dbReference type="Proteomes" id="UP000001697">
    <property type="component" value="Chromosome"/>
</dbReference>
<dbReference type="GO" id="GO:0005737">
    <property type="term" value="C:cytoplasm"/>
    <property type="evidence" value="ECO:0007669"/>
    <property type="project" value="UniProtKB-SubCell"/>
</dbReference>
<dbReference type="GO" id="GO:0003746">
    <property type="term" value="F:translation elongation factor activity"/>
    <property type="evidence" value="ECO:0007669"/>
    <property type="project" value="UniProtKB-UniRule"/>
</dbReference>
<dbReference type="CDD" id="cd14275">
    <property type="entry name" value="UBA_EF-Ts"/>
    <property type="match status" value="1"/>
</dbReference>
<dbReference type="FunFam" id="1.10.286.20:FF:000001">
    <property type="entry name" value="Elongation factor Ts"/>
    <property type="match status" value="1"/>
</dbReference>
<dbReference type="FunFam" id="1.10.8.10:FF:000001">
    <property type="entry name" value="Elongation factor Ts"/>
    <property type="match status" value="1"/>
</dbReference>
<dbReference type="Gene3D" id="1.10.286.20">
    <property type="match status" value="1"/>
</dbReference>
<dbReference type="Gene3D" id="1.10.8.10">
    <property type="entry name" value="DNA helicase RuvA subunit, C-terminal domain"/>
    <property type="match status" value="1"/>
</dbReference>
<dbReference type="Gene3D" id="3.30.479.20">
    <property type="entry name" value="Elongation factor Ts, dimerisation domain"/>
    <property type="match status" value="2"/>
</dbReference>
<dbReference type="HAMAP" id="MF_00050">
    <property type="entry name" value="EF_Ts"/>
    <property type="match status" value="1"/>
</dbReference>
<dbReference type="InterPro" id="IPR036402">
    <property type="entry name" value="EF-Ts_dimer_sf"/>
</dbReference>
<dbReference type="InterPro" id="IPR001816">
    <property type="entry name" value="Transl_elong_EFTs/EF1B"/>
</dbReference>
<dbReference type="InterPro" id="IPR014039">
    <property type="entry name" value="Transl_elong_EFTs/EF1B_dimer"/>
</dbReference>
<dbReference type="InterPro" id="IPR018101">
    <property type="entry name" value="Transl_elong_Ts_CS"/>
</dbReference>
<dbReference type="InterPro" id="IPR009060">
    <property type="entry name" value="UBA-like_sf"/>
</dbReference>
<dbReference type="NCBIfam" id="TIGR00116">
    <property type="entry name" value="tsf"/>
    <property type="match status" value="1"/>
</dbReference>
<dbReference type="PANTHER" id="PTHR11741">
    <property type="entry name" value="ELONGATION FACTOR TS"/>
    <property type="match status" value="1"/>
</dbReference>
<dbReference type="PANTHER" id="PTHR11741:SF0">
    <property type="entry name" value="ELONGATION FACTOR TS, MITOCHONDRIAL"/>
    <property type="match status" value="1"/>
</dbReference>
<dbReference type="Pfam" id="PF00889">
    <property type="entry name" value="EF_TS"/>
    <property type="match status" value="1"/>
</dbReference>
<dbReference type="SUPFAM" id="SSF54713">
    <property type="entry name" value="Elongation factor Ts (EF-Ts), dimerisation domain"/>
    <property type="match status" value="2"/>
</dbReference>
<dbReference type="SUPFAM" id="SSF46934">
    <property type="entry name" value="UBA-like"/>
    <property type="match status" value="1"/>
</dbReference>
<dbReference type="PROSITE" id="PS01126">
    <property type="entry name" value="EF_TS_1"/>
    <property type="match status" value="1"/>
</dbReference>
<dbReference type="PROSITE" id="PS01127">
    <property type="entry name" value="EF_TS_2"/>
    <property type="match status" value="1"/>
</dbReference>
<proteinExistence type="inferred from homology"/>
<protein>
    <recommendedName>
        <fullName evidence="1">Elongation factor Ts</fullName>
        <shortName evidence="1">EF-Ts</shortName>
    </recommendedName>
</protein>